<gene>
    <name evidence="2" type="primary">ohgt</name>
    <name evidence="2" type="synonym">crbn</name>
    <name type="ORF">GI23135</name>
</gene>
<feature type="chain" id="PRO_0000393882" description="Protein cereblon">
    <location>
        <begin position="1"/>
        <end position="676"/>
    </location>
</feature>
<feature type="domain" description="Lon N-terminal" evidence="3">
    <location>
        <begin position="314"/>
        <end position="542"/>
    </location>
</feature>
<feature type="domain" description="CULT" evidence="4">
    <location>
        <begin position="541"/>
        <end position="650"/>
    </location>
</feature>
<feature type="region of interest" description="Disordered" evidence="5">
    <location>
        <begin position="1"/>
        <end position="78"/>
    </location>
</feature>
<feature type="region of interest" description="Disordered" evidence="5">
    <location>
        <begin position="118"/>
        <end position="194"/>
    </location>
</feature>
<feature type="region of interest" description="Disordered" evidence="5">
    <location>
        <begin position="249"/>
        <end position="276"/>
    </location>
</feature>
<feature type="compositionally biased region" description="Acidic residues" evidence="5">
    <location>
        <begin position="1"/>
        <end position="11"/>
    </location>
</feature>
<feature type="compositionally biased region" description="Low complexity" evidence="5">
    <location>
        <begin position="12"/>
        <end position="33"/>
    </location>
</feature>
<feature type="compositionally biased region" description="Low complexity" evidence="5">
    <location>
        <begin position="125"/>
        <end position="139"/>
    </location>
</feature>
<feature type="compositionally biased region" description="Polar residues" evidence="5">
    <location>
        <begin position="156"/>
        <end position="177"/>
    </location>
</feature>
<feature type="binding site" evidence="4">
    <location>
        <position position="546"/>
    </location>
    <ligand>
        <name>Zn(2+)</name>
        <dbReference type="ChEBI" id="CHEBI:29105"/>
    </ligand>
</feature>
<feature type="binding site" evidence="4">
    <location>
        <position position="549"/>
    </location>
    <ligand>
        <name>Zn(2+)</name>
        <dbReference type="ChEBI" id="CHEBI:29105"/>
    </ligand>
</feature>
<feature type="binding site" evidence="4">
    <location>
        <position position="615"/>
    </location>
    <ligand>
        <name>Zn(2+)</name>
        <dbReference type="ChEBI" id="CHEBI:29105"/>
    </ligand>
</feature>
<feature type="binding site" evidence="4">
    <location>
        <position position="618"/>
    </location>
    <ligand>
        <name>Zn(2+)</name>
        <dbReference type="ChEBI" id="CHEBI:29105"/>
    </ligand>
</feature>
<proteinExistence type="inferred from homology"/>
<name>CRBN_DROMO</name>
<evidence type="ECO:0000250" key="1">
    <source>
        <dbReference type="UniProtKB" id="Q96SW2"/>
    </source>
</evidence>
<evidence type="ECO:0000250" key="2">
    <source>
        <dbReference type="UniProtKB" id="Q9VH36"/>
    </source>
</evidence>
<evidence type="ECO:0000255" key="3">
    <source>
        <dbReference type="PROSITE-ProRule" id="PRU01123"/>
    </source>
</evidence>
<evidence type="ECO:0000255" key="4">
    <source>
        <dbReference type="PROSITE-ProRule" id="PRU01124"/>
    </source>
</evidence>
<evidence type="ECO:0000256" key="5">
    <source>
        <dbReference type="SAM" id="MobiDB-lite"/>
    </source>
</evidence>
<evidence type="ECO:0000305" key="6"/>
<protein>
    <recommendedName>
        <fullName evidence="2">Protein cereblon</fullName>
    </recommendedName>
    <alternativeName>
        <fullName evidence="2">Protein ohgata</fullName>
    </alternativeName>
</protein>
<accession>B4KCG1</accession>
<reference key="1">
    <citation type="journal article" date="2007" name="Nature">
        <title>Evolution of genes and genomes on the Drosophila phylogeny.</title>
        <authorList>
            <consortium name="Drosophila 12 genomes consortium"/>
        </authorList>
    </citation>
    <scope>NUCLEOTIDE SEQUENCE [LARGE SCALE GENOMIC DNA]</scope>
    <source>
        <strain>Tucson 15081-1352.22</strain>
    </source>
</reference>
<dbReference type="EMBL" id="CH933806">
    <property type="protein sequence ID" value="EDW14780.1"/>
    <property type="molecule type" value="Genomic_DNA"/>
</dbReference>
<dbReference type="SMR" id="B4KCG1"/>
<dbReference type="FunCoup" id="B4KCG1">
    <property type="interactions" value="1441"/>
</dbReference>
<dbReference type="EnsemblMetazoa" id="FBtr0173860">
    <property type="protein sequence ID" value="FBpp0172352"/>
    <property type="gene ID" value="FBgn0145862"/>
</dbReference>
<dbReference type="EnsemblMetazoa" id="XM_001999283.4">
    <property type="protein sequence ID" value="XP_001999319.1"/>
    <property type="gene ID" value="LOC6573232"/>
</dbReference>
<dbReference type="GeneID" id="6573232"/>
<dbReference type="CTD" id="41230"/>
<dbReference type="eggNOG" id="KOG1400">
    <property type="taxonomic scope" value="Eukaryota"/>
</dbReference>
<dbReference type="HOGENOM" id="CLU_028769_0_0_1"/>
<dbReference type="InParanoid" id="B4KCG1"/>
<dbReference type="OMA" id="SMRDKYQ"/>
<dbReference type="OrthoDB" id="267517at2759"/>
<dbReference type="PhylomeDB" id="B4KCG1"/>
<dbReference type="UniPathway" id="UPA00143"/>
<dbReference type="Proteomes" id="UP000009192">
    <property type="component" value="Unassembled WGS sequence"/>
</dbReference>
<dbReference type="GO" id="GO:0005634">
    <property type="term" value="C:nucleus"/>
    <property type="evidence" value="ECO:0007669"/>
    <property type="project" value="UniProtKB-SubCell"/>
</dbReference>
<dbReference type="GO" id="GO:0046872">
    <property type="term" value="F:metal ion binding"/>
    <property type="evidence" value="ECO:0007669"/>
    <property type="project" value="UniProtKB-KW"/>
</dbReference>
<dbReference type="GO" id="GO:1900075">
    <property type="term" value="P:positive regulation of neuromuscular synaptic transmission"/>
    <property type="evidence" value="ECO:0007669"/>
    <property type="project" value="EnsemblMetazoa"/>
</dbReference>
<dbReference type="GO" id="GO:0030177">
    <property type="term" value="P:positive regulation of Wnt signaling pathway"/>
    <property type="evidence" value="ECO:0007669"/>
    <property type="project" value="EnsemblMetazoa"/>
</dbReference>
<dbReference type="GO" id="GO:0016567">
    <property type="term" value="P:protein ubiquitination"/>
    <property type="evidence" value="ECO:0007669"/>
    <property type="project" value="UniProtKB-UniPathway"/>
</dbReference>
<dbReference type="CDD" id="cd15777">
    <property type="entry name" value="CRBN_C_like"/>
    <property type="match status" value="1"/>
</dbReference>
<dbReference type="FunFam" id="2.170.150.20:FF:000005">
    <property type="entry name" value="Blast:Protein cereblon homolog"/>
    <property type="match status" value="1"/>
</dbReference>
<dbReference type="Gene3D" id="1.20.58.1480">
    <property type="match status" value="1"/>
</dbReference>
<dbReference type="Gene3D" id="2.170.150.20">
    <property type="entry name" value="Peptide methionine sulfoxide reductase"/>
    <property type="match status" value="1"/>
</dbReference>
<dbReference type="InterPro" id="IPR034750">
    <property type="entry name" value="CULT"/>
</dbReference>
<dbReference type="InterPro" id="IPR003111">
    <property type="entry name" value="Lon_prtase_N"/>
</dbReference>
<dbReference type="InterPro" id="IPR004910">
    <property type="entry name" value="Yippee/Mis18/Cereblon"/>
</dbReference>
<dbReference type="Pfam" id="PF03226">
    <property type="entry name" value="Yippee-Mis18"/>
    <property type="match status" value="1"/>
</dbReference>
<dbReference type="PROSITE" id="PS51788">
    <property type="entry name" value="CULT"/>
    <property type="match status" value="1"/>
</dbReference>
<dbReference type="PROSITE" id="PS51787">
    <property type="entry name" value="LON_N"/>
    <property type="match status" value="1"/>
</dbReference>
<comment type="function">
    <text evidence="2">Substrate recognition component of a DCX (DDB1-CUL4-X-box) E3 protein ligase complex that mediates the ubiquitination and subsequent proteasomal degradation of target proteins. Has an essential role in mediating growth by negatively regulating insulin signaling. It also has a role in maintaining presynaptic function in the neuromuscular junction synapses of third-instar larvae.</text>
</comment>
<comment type="pathway">
    <text evidence="1">Protein modification; protein ubiquitination.</text>
</comment>
<comment type="subunit">
    <text evidence="1 2">Likely a component of a DCX (DDB1-CUL4-X-box) protein ligase complex (By similarity). May interact with pic/DDB1 (By similarity).</text>
</comment>
<comment type="subcellular location">
    <subcellularLocation>
        <location evidence="2">Nucleus</location>
    </subcellularLocation>
</comment>
<comment type="PTM">
    <text evidence="2">Ubiquitinated.</text>
</comment>
<comment type="similarity">
    <text evidence="6">Belongs to the CRBN family.</text>
</comment>
<sequence>MDDEETAEIDETSSSSTNTNTNATAMATATETAAEMHVELEQDEEIPQGSENGAGTGAGDGTRAEAGASAIHAETTAHVSSRARLENMIEEVDNMFEEVSELMVDVTELMRRANQLREDAGTGAVPQNPTVATNTTPPAEIEEEEEGPEQQAEQALVNNDSPSQASISSRHSGSDMSLDSPGSEDDSDAEAVPRWMIPANRVRSAVDMLVSQARNRDGGIATLLRRENFLQRVRSMVFSQDRIRGRASDDANNADVINTVPDDTSEASPPPPLDVDMEEGVRFDTNLPAEHSYFGTNLNRVPGVDYLEVGSTHRMLIFMHQHILFPGEVLPFMIDGNIIDEEIEDTGRDGVIFGVGFPLMQPPDDNPHKLYGVTCQIYEKGESGRQHVFYKSRALQRIVINCDDIQGPPQYIARNPTMKCYSKVKILPEYFLPEPLKCIDMGSLNRFRDIPSMQEKFRRFQLTTTPWPVEACGEYSFEHIVEKARQKLEIHKIDTMPKCPIQLSFWLVRNLHLTEKMMRLTFLTDSVNIRLQIIGTTLKHESLFYCRYCNSSLAYCSDLFAMSKHGVQTQYCNSAGYIHETNTVYRVIAHAIGYSGEPSTEFSWFPGYQWHIIICKFCAQHVGWEFKAVEPNLAPKVFFGLAGSSVRIGKTSERTPTHGSRFVVRNLLRLVSRELE</sequence>
<keyword id="KW-0479">Metal-binding</keyword>
<keyword id="KW-0539">Nucleus</keyword>
<keyword id="KW-1185">Reference proteome</keyword>
<keyword id="KW-0832">Ubl conjugation</keyword>
<keyword id="KW-0833">Ubl conjugation pathway</keyword>
<keyword id="KW-0862">Zinc</keyword>
<organism>
    <name type="scientific">Drosophila mojavensis</name>
    <name type="common">Fruit fly</name>
    <dbReference type="NCBI Taxonomy" id="7230"/>
    <lineage>
        <taxon>Eukaryota</taxon>
        <taxon>Metazoa</taxon>
        <taxon>Ecdysozoa</taxon>
        <taxon>Arthropoda</taxon>
        <taxon>Hexapoda</taxon>
        <taxon>Insecta</taxon>
        <taxon>Pterygota</taxon>
        <taxon>Neoptera</taxon>
        <taxon>Endopterygota</taxon>
        <taxon>Diptera</taxon>
        <taxon>Brachycera</taxon>
        <taxon>Muscomorpha</taxon>
        <taxon>Ephydroidea</taxon>
        <taxon>Drosophilidae</taxon>
        <taxon>Drosophila</taxon>
    </lineage>
</organism>